<reference key="1">
    <citation type="submission" date="2007-03" db="EMBL/GenBank/DDBJ databases">
        <title>Complete sequence of Desulfotomaculum reducens MI-1.</title>
        <authorList>
            <consortium name="US DOE Joint Genome Institute"/>
            <person name="Copeland A."/>
            <person name="Lucas S."/>
            <person name="Lapidus A."/>
            <person name="Barry K."/>
            <person name="Detter J.C."/>
            <person name="Glavina del Rio T."/>
            <person name="Hammon N."/>
            <person name="Israni S."/>
            <person name="Dalin E."/>
            <person name="Tice H."/>
            <person name="Pitluck S."/>
            <person name="Sims D."/>
            <person name="Brettin T."/>
            <person name="Bruce D."/>
            <person name="Han C."/>
            <person name="Tapia R."/>
            <person name="Schmutz J."/>
            <person name="Larimer F."/>
            <person name="Land M."/>
            <person name="Hauser L."/>
            <person name="Kyrpides N."/>
            <person name="Kim E."/>
            <person name="Tebo B.M."/>
            <person name="Richardson P."/>
        </authorList>
    </citation>
    <scope>NUCLEOTIDE SEQUENCE [LARGE SCALE GENOMIC DNA]</scope>
    <source>
        <strain>ATCC BAA-1160 / DSM 100696 / MI-1</strain>
    </source>
</reference>
<dbReference type="EC" id="3.4.21.92" evidence="1"/>
<dbReference type="EMBL" id="CP000612">
    <property type="protein sequence ID" value="ABO51072.1"/>
    <property type="molecule type" value="Genomic_DNA"/>
</dbReference>
<dbReference type="RefSeq" id="WP_011878870.1">
    <property type="nucleotide sequence ID" value="NC_009253.1"/>
</dbReference>
<dbReference type="SMR" id="A4J7L9"/>
<dbReference type="STRING" id="349161.Dred_2562"/>
<dbReference type="MEROPS" id="S14.001"/>
<dbReference type="KEGG" id="drm:Dred_2562"/>
<dbReference type="eggNOG" id="COG0740">
    <property type="taxonomic scope" value="Bacteria"/>
</dbReference>
<dbReference type="HOGENOM" id="CLU_058707_3_2_9"/>
<dbReference type="OrthoDB" id="9802800at2"/>
<dbReference type="Proteomes" id="UP000001556">
    <property type="component" value="Chromosome"/>
</dbReference>
<dbReference type="GO" id="GO:0005737">
    <property type="term" value="C:cytoplasm"/>
    <property type="evidence" value="ECO:0007669"/>
    <property type="project" value="UniProtKB-SubCell"/>
</dbReference>
<dbReference type="GO" id="GO:0009368">
    <property type="term" value="C:endopeptidase Clp complex"/>
    <property type="evidence" value="ECO:0007669"/>
    <property type="project" value="TreeGrafter"/>
</dbReference>
<dbReference type="GO" id="GO:0004176">
    <property type="term" value="F:ATP-dependent peptidase activity"/>
    <property type="evidence" value="ECO:0007669"/>
    <property type="project" value="InterPro"/>
</dbReference>
<dbReference type="GO" id="GO:0051117">
    <property type="term" value="F:ATPase binding"/>
    <property type="evidence" value="ECO:0007669"/>
    <property type="project" value="TreeGrafter"/>
</dbReference>
<dbReference type="GO" id="GO:0004252">
    <property type="term" value="F:serine-type endopeptidase activity"/>
    <property type="evidence" value="ECO:0007669"/>
    <property type="project" value="UniProtKB-UniRule"/>
</dbReference>
<dbReference type="GO" id="GO:0006515">
    <property type="term" value="P:protein quality control for misfolded or incompletely synthesized proteins"/>
    <property type="evidence" value="ECO:0007669"/>
    <property type="project" value="TreeGrafter"/>
</dbReference>
<dbReference type="CDD" id="cd07017">
    <property type="entry name" value="S14_ClpP_2"/>
    <property type="match status" value="1"/>
</dbReference>
<dbReference type="FunFam" id="3.90.226.10:FF:000001">
    <property type="entry name" value="ATP-dependent Clp protease proteolytic subunit"/>
    <property type="match status" value="1"/>
</dbReference>
<dbReference type="Gene3D" id="3.90.226.10">
    <property type="entry name" value="2-enoyl-CoA Hydratase, Chain A, domain 1"/>
    <property type="match status" value="1"/>
</dbReference>
<dbReference type="HAMAP" id="MF_00444">
    <property type="entry name" value="ClpP"/>
    <property type="match status" value="1"/>
</dbReference>
<dbReference type="InterPro" id="IPR001907">
    <property type="entry name" value="ClpP"/>
</dbReference>
<dbReference type="InterPro" id="IPR029045">
    <property type="entry name" value="ClpP/crotonase-like_dom_sf"/>
</dbReference>
<dbReference type="InterPro" id="IPR023562">
    <property type="entry name" value="ClpP/TepA"/>
</dbReference>
<dbReference type="InterPro" id="IPR033135">
    <property type="entry name" value="ClpP_His_AS"/>
</dbReference>
<dbReference type="InterPro" id="IPR018215">
    <property type="entry name" value="ClpP_Ser_AS"/>
</dbReference>
<dbReference type="NCBIfam" id="TIGR00493">
    <property type="entry name" value="clpP"/>
    <property type="match status" value="1"/>
</dbReference>
<dbReference type="NCBIfam" id="NF001368">
    <property type="entry name" value="PRK00277.1"/>
    <property type="match status" value="1"/>
</dbReference>
<dbReference type="NCBIfam" id="NF009205">
    <property type="entry name" value="PRK12553.1"/>
    <property type="match status" value="1"/>
</dbReference>
<dbReference type="PANTHER" id="PTHR10381">
    <property type="entry name" value="ATP-DEPENDENT CLP PROTEASE PROTEOLYTIC SUBUNIT"/>
    <property type="match status" value="1"/>
</dbReference>
<dbReference type="PANTHER" id="PTHR10381:SF70">
    <property type="entry name" value="ATP-DEPENDENT CLP PROTEASE PROTEOLYTIC SUBUNIT"/>
    <property type="match status" value="1"/>
</dbReference>
<dbReference type="Pfam" id="PF00574">
    <property type="entry name" value="CLP_protease"/>
    <property type="match status" value="1"/>
</dbReference>
<dbReference type="PRINTS" id="PR00127">
    <property type="entry name" value="CLPPROTEASEP"/>
</dbReference>
<dbReference type="SUPFAM" id="SSF52096">
    <property type="entry name" value="ClpP/crotonase"/>
    <property type="match status" value="1"/>
</dbReference>
<dbReference type="PROSITE" id="PS00382">
    <property type="entry name" value="CLP_PROTEASE_HIS"/>
    <property type="match status" value="1"/>
</dbReference>
<dbReference type="PROSITE" id="PS00381">
    <property type="entry name" value="CLP_PROTEASE_SER"/>
    <property type="match status" value="1"/>
</dbReference>
<name>CLPP_DESRM</name>
<evidence type="ECO:0000255" key="1">
    <source>
        <dbReference type="HAMAP-Rule" id="MF_00444"/>
    </source>
</evidence>
<accession>A4J7L9</accession>
<sequence>MSGLVPIVVEQTNRGERAYDIYSRLLKDRIIFIGGPIDDHIANLVIAQFLFLEAEDPEKDIHLYINSPGGVVTAGLAIYDTMQYIKPAVSTICLGQAASMGSFLLAAGAPGKRYALPMARIMIHQPLGGVQGQATDIDIHAKEILRMKDLLNDRLAHHTGQPLEQITRDTERDYFMSAEEAKKYGLIDEVMPYRK</sequence>
<organism>
    <name type="scientific">Desulforamulus reducens (strain ATCC BAA-1160 / DSM 100696 / MI-1)</name>
    <name type="common">Desulfotomaculum reducens</name>
    <dbReference type="NCBI Taxonomy" id="349161"/>
    <lineage>
        <taxon>Bacteria</taxon>
        <taxon>Bacillati</taxon>
        <taxon>Bacillota</taxon>
        <taxon>Clostridia</taxon>
        <taxon>Eubacteriales</taxon>
        <taxon>Peptococcaceae</taxon>
        <taxon>Desulforamulus</taxon>
    </lineage>
</organism>
<feature type="chain" id="PRO_1000072341" description="ATP-dependent Clp protease proteolytic subunit">
    <location>
        <begin position="1"/>
        <end position="195"/>
    </location>
</feature>
<feature type="active site" description="Nucleophile" evidence="1">
    <location>
        <position position="99"/>
    </location>
</feature>
<feature type="active site" evidence="1">
    <location>
        <position position="124"/>
    </location>
</feature>
<protein>
    <recommendedName>
        <fullName evidence="1">ATP-dependent Clp protease proteolytic subunit</fullName>
        <ecNumber evidence="1">3.4.21.92</ecNumber>
    </recommendedName>
    <alternativeName>
        <fullName evidence="1">Endopeptidase Clp</fullName>
    </alternativeName>
</protein>
<keyword id="KW-0963">Cytoplasm</keyword>
<keyword id="KW-0378">Hydrolase</keyword>
<keyword id="KW-0645">Protease</keyword>
<keyword id="KW-1185">Reference proteome</keyword>
<keyword id="KW-0720">Serine protease</keyword>
<comment type="function">
    <text evidence="1">Cleaves peptides in various proteins in a process that requires ATP hydrolysis. Has a chymotrypsin-like activity. Plays a major role in the degradation of misfolded proteins.</text>
</comment>
<comment type="catalytic activity">
    <reaction evidence="1">
        <text>Hydrolysis of proteins to small peptides in the presence of ATP and magnesium. alpha-casein is the usual test substrate. In the absence of ATP, only oligopeptides shorter than five residues are hydrolyzed (such as succinyl-Leu-Tyr-|-NHMec, and Leu-Tyr-Leu-|-Tyr-Trp, in which cleavage of the -Tyr-|-Leu- and -Tyr-|-Trp bonds also occurs).</text>
        <dbReference type="EC" id="3.4.21.92"/>
    </reaction>
</comment>
<comment type="subunit">
    <text evidence="1">Fourteen ClpP subunits assemble into 2 heptameric rings which stack back to back to give a disk-like structure with a central cavity, resembling the structure of eukaryotic proteasomes.</text>
</comment>
<comment type="subcellular location">
    <subcellularLocation>
        <location evidence="1">Cytoplasm</location>
    </subcellularLocation>
</comment>
<comment type="similarity">
    <text evidence="1">Belongs to the peptidase S14 family.</text>
</comment>
<proteinExistence type="inferred from homology"/>
<gene>
    <name evidence="1" type="primary">clpP</name>
    <name type="ordered locus">Dred_2562</name>
</gene>